<proteinExistence type="inferred from homology"/>
<reference key="1">
    <citation type="submission" date="2009-05" db="EMBL/GenBank/DDBJ databases">
        <title>Complete sequence of Tolumonas auensis DSM 9187.</title>
        <authorList>
            <consortium name="US DOE Joint Genome Institute"/>
            <person name="Lucas S."/>
            <person name="Copeland A."/>
            <person name="Lapidus A."/>
            <person name="Glavina del Rio T."/>
            <person name="Tice H."/>
            <person name="Bruce D."/>
            <person name="Goodwin L."/>
            <person name="Pitluck S."/>
            <person name="Chertkov O."/>
            <person name="Brettin T."/>
            <person name="Detter J.C."/>
            <person name="Han C."/>
            <person name="Larimer F."/>
            <person name="Land M."/>
            <person name="Hauser L."/>
            <person name="Kyrpides N."/>
            <person name="Mikhailova N."/>
            <person name="Spring S."/>
            <person name="Beller H."/>
        </authorList>
    </citation>
    <scope>NUCLEOTIDE SEQUENCE [LARGE SCALE GENOMIC DNA]</scope>
    <source>
        <strain>DSM 9187 / NBRC 110442 / TA 4</strain>
    </source>
</reference>
<gene>
    <name evidence="1" type="primary">lexA</name>
    <name type="ordered locus">Tola_0146</name>
</gene>
<feature type="chain" id="PRO_1000201827" description="LexA repressor">
    <location>
        <begin position="1"/>
        <end position="206"/>
    </location>
</feature>
<feature type="DNA-binding region" description="H-T-H motif" evidence="1">
    <location>
        <begin position="28"/>
        <end position="48"/>
    </location>
</feature>
<feature type="active site" description="For autocatalytic cleavage activity" evidence="1">
    <location>
        <position position="122"/>
    </location>
</feature>
<feature type="active site" description="For autocatalytic cleavage activity" evidence="1">
    <location>
        <position position="160"/>
    </location>
</feature>
<feature type="site" description="Cleavage; by autolysis" evidence="1">
    <location>
        <begin position="87"/>
        <end position="88"/>
    </location>
</feature>
<organism>
    <name type="scientific">Tolumonas auensis (strain DSM 9187 / NBRC 110442 / TA 4)</name>
    <dbReference type="NCBI Taxonomy" id="595494"/>
    <lineage>
        <taxon>Bacteria</taxon>
        <taxon>Pseudomonadati</taxon>
        <taxon>Pseudomonadota</taxon>
        <taxon>Gammaproteobacteria</taxon>
        <taxon>Aeromonadales</taxon>
        <taxon>Aeromonadaceae</taxon>
        <taxon>Tolumonas</taxon>
    </lineage>
</organism>
<dbReference type="EC" id="3.4.21.88" evidence="1"/>
<dbReference type="EMBL" id="CP001616">
    <property type="protein sequence ID" value="ACQ91776.1"/>
    <property type="molecule type" value="Genomic_DNA"/>
</dbReference>
<dbReference type="RefSeq" id="WP_012728375.1">
    <property type="nucleotide sequence ID" value="NC_012691.1"/>
</dbReference>
<dbReference type="SMR" id="C4L7X7"/>
<dbReference type="STRING" id="595494.Tola_0146"/>
<dbReference type="MEROPS" id="S24.001"/>
<dbReference type="KEGG" id="tau:Tola_0146"/>
<dbReference type="eggNOG" id="COG1974">
    <property type="taxonomic scope" value="Bacteria"/>
</dbReference>
<dbReference type="HOGENOM" id="CLU_066192_45_3_6"/>
<dbReference type="OrthoDB" id="9802364at2"/>
<dbReference type="Proteomes" id="UP000009073">
    <property type="component" value="Chromosome"/>
</dbReference>
<dbReference type="GO" id="GO:0003677">
    <property type="term" value="F:DNA binding"/>
    <property type="evidence" value="ECO:0007669"/>
    <property type="project" value="UniProtKB-UniRule"/>
</dbReference>
<dbReference type="GO" id="GO:0004252">
    <property type="term" value="F:serine-type endopeptidase activity"/>
    <property type="evidence" value="ECO:0007669"/>
    <property type="project" value="UniProtKB-UniRule"/>
</dbReference>
<dbReference type="GO" id="GO:0006281">
    <property type="term" value="P:DNA repair"/>
    <property type="evidence" value="ECO:0007669"/>
    <property type="project" value="UniProtKB-UniRule"/>
</dbReference>
<dbReference type="GO" id="GO:0006260">
    <property type="term" value="P:DNA replication"/>
    <property type="evidence" value="ECO:0007669"/>
    <property type="project" value="UniProtKB-UniRule"/>
</dbReference>
<dbReference type="GO" id="GO:0045892">
    <property type="term" value="P:negative regulation of DNA-templated transcription"/>
    <property type="evidence" value="ECO:0007669"/>
    <property type="project" value="UniProtKB-UniRule"/>
</dbReference>
<dbReference type="GO" id="GO:0006508">
    <property type="term" value="P:proteolysis"/>
    <property type="evidence" value="ECO:0007669"/>
    <property type="project" value="InterPro"/>
</dbReference>
<dbReference type="GO" id="GO:0009432">
    <property type="term" value="P:SOS response"/>
    <property type="evidence" value="ECO:0007669"/>
    <property type="project" value="UniProtKB-UniRule"/>
</dbReference>
<dbReference type="CDD" id="cd06529">
    <property type="entry name" value="S24_LexA-like"/>
    <property type="match status" value="1"/>
</dbReference>
<dbReference type="FunFam" id="1.10.10.10:FF:000009">
    <property type="entry name" value="LexA repressor"/>
    <property type="match status" value="1"/>
</dbReference>
<dbReference type="FunFam" id="2.10.109.10:FF:000001">
    <property type="entry name" value="LexA repressor"/>
    <property type="match status" value="1"/>
</dbReference>
<dbReference type="Gene3D" id="2.10.109.10">
    <property type="entry name" value="Umud Fragment, subunit A"/>
    <property type="match status" value="1"/>
</dbReference>
<dbReference type="Gene3D" id="1.10.10.10">
    <property type="entry name" value="Winged helix-like DNA-binding domain superfamily/Winged helix DNA-binding domain"/>
    <property type="match status" value="1"/>
</dbReference>
<dbReference type="HAMAP" id="MF_00015">
    <property type="entry name" value="LexA"/>
    <property type="match status" value="1"/>
</dbReference>
<dbReference type="InterPro" id="IPR006200">
    <property type="entry name" value="LexA"/>
</dbReference>
<dbReference type="InterPro" id="IPR039418">
    <property type="entry name" value="LexA-like"/>
</dbReference>
<dbReference type="InterPro" id="IPR036286">
    <property type="entry name" value="LexA/Signal_pep-like_sf"/>
</dbReference>
<dbReference type="InterPro" id="IPR006199">
    <property type="entry name" value="LexA_DNA-bd_dom"/>
</dbReference>
<dbReference type="InterPro" id="IPR050077">
    <property type="entry name" value="LexA_repressor"/>
</dbReference>
<dbReference type="InterPro" id="IPR006197">
    <property type="entry name" value="Peptidase_S24_LexA"/>
</dbReference>
<dbReference type="InterPro" id="IPR015927">
    <property type="entry name" value="Peptidase_S24_S26A/B/C"/>
</dbReference>
<dbReference type="InterPro" id="IPR036388">
    <property type="entry name" value="WH-like_DNA-bd_sf"/>
</dbReference>
<dbReference type="InterPro" id="IPR036390">
    <property type="entry name" value="WH_DNA-bd_sf"/>
</dbReference>
<dbReference type="NCBIfam" id="TIGR00498">
    <property type="entry name" value="lexA"/>
    <property type="match status" value="1"/>
</dbReference>
<dbReference type="PANTHER" id="PTHR33516">
    <property type="entry name" value="LEXA REPRESSOR"/>
    <property type="match status" value="1"/>
</dbReference>
<dbReference type="PANTHER" id="PTHR33516:SF2">
    <property type="entry name" value="LEXA REPRESSOR-RELATED"/>
    <property type="match status" value="1"/>
</dbReference>
<dbReference type="Pfam" id="PF01726">
    <property type="entry name" value="LexA_DNA_bind"/>
    <property type="match status" value="1"/>
</dbReference>
<dbReference type="Pfam" id="PF00717">
    <property type="entry name" value="Peptidase_S24"/>
    <property type="match status" value="1"/>
</dbReference>
<dbReference type="PRINTS" id="PR00726">
    <property type="entry name" value="LEXASERPTASE"/>
</dbReference>
<dbReference type="SUPFAM" id="SSF51306">
    <property type="entry name" value="LexA/Signal peptidase"/>
    <property type="match status" value="1"/>
</dbReference>
<dbReference type="SUPFAM" id="SSF46785">
    <property type="entry name" value="Winged helix' DNA-binding domain"/>
    <property type="match status" value="1"/>
</dbReference>
<sequence>MKQLTPRQAEVLALIRSAVQQTGMPPTRAEIASELGFKSANAAEEHLKALARKGVIRMMPGTSRGIQLLTDEPEEDEGLPLIGRVAAGEPILAQQHIETHYQIDGSLFHPRADFLLRVHGMSMKNIGILDGDLLAVHKTTQANNGQVVVARVGDDEVTVKRFERKGHIVQLLPENEELQPIVVDLTQENLSIEGLAVGVIRNGNWL</sequence>
<accession>C4L7X7</accession>
<name>LEXA_TOLAT</name>
<keyword id="KW-0068">Autocatalytic cleavage</keyword>
<keyword id="KW-0227">DNA damage</keyword>
<keyword id="KW-0234">DNA repair</keyword>
<keyword id="KW-0235">DNA replication</keyword>
<keyword id="KW-0238">DNA-binding</keyword>
<keyword id="KW-0378">Hydrolase</keyword>
<keyword id="KW-1185">Reference proteome</keyword>
<keyword id="KW-0678">Repressor</keyword>
<keyword id="KW-0742">SOS response</keyword>
<keyword id="KW-0804">Transcription</keyword>
<keyword id="KW-0805">Transcription regulation</keyword>
<evidence type="ECO:0000255" key="1">
    <source>
        <dbReference type="HAMAP-Rule" id="MF_00015"/>
    </source>
</evidence>
<protein>
    <recommendedName>
        <fullName evidence="1">LexA repressor</fullName>
        <ecNumber evidence="1">3.4.21.88</ecNumber>
    </recommendedName>
</protein>
<comment type="function">
    <text evidence="1">Represses a number of genes involved in the response to DNA damage (SOS response), including recA and lexA. In the presence of single-stranded DNA, RecA interacts with LexA causing an autocatalytic cleavage which disrupts the DNA-binding part of LexA, leading to derepression of the SOS regulon and eventually DNA repair.</text>
</comment>
<comment type="catalytic activity">
    <reaction evidence="1">
        <text>Hydrolysis of Ala-|-Gly bond in repressor LexA.</text>
        <dbReference type="EC" id="3.4.21.88"/>
    </reaction>
</comment>
<comment type="subunit">
    <text evidence="1">Homodimer.</text>
</comment>
<comment type="similarity">
    <text evidence="1">Belongs to the peptidase S24 family.</text>
</comment>